<proteinExistence type="inferred from homology"/>
<evidence type="ECO:0000255" key="1">
    <source>
        <dbReference type="HAMAP-Rule" id="MF_00227"/>
    </source>
</evidence>
<organism>
    <name type="scientific">Escherichia coli O9:H4 (strain HS)</name>
    <dbReference type="NCBI Taxonomy" id="331112"/>
    <lineage>
        <taxon>Bacteria</taxon>
        <taxon>Pseudomonadati</taxon>
        <taxon>Pseudomonadota</taxon>
        <taxon>Gammaproteobacteria</taxon>
        <taxon>Enterobacterales</taxon>
        <taxon>Enterobacteriaceae</taxon>
        <taxon>Escherichia</taxon>
    </lineage>
</organism>
<dbReference type="EC" id="3.1.26.5" evidence="1"/>
<dbReference type="EMBL" id="CP000802">
    <property type="protein sequence ID" value="ABV08119.1"/>
    <property type="molecule type" value="Genomic_DNA"/>
</dbReference>
<dbReference type="RefSeq" id="WP_000239730.1">
    <property type="nucleotide sequence ID" value="NC_009800.1"/>
</dbReference>
<dbReference type="BMRB" id="A8A6G5"/>
<dbReference type="SMR" id="A8A6G5"/>
<dbReference type="GeneID" id="93778446"/>
<dbReference type="KEGG" id="ecx:EcHS_A3917"/>
<dbReference type="HOGENOM" id="CLU_117179_11_0_6"/>
<dbReference type="GO" id="GO:0030677">
    <property type="term" value="C:ribonuclease P complex"/>
    <property type="evidence" value="ECO:0007669"/>
    <property type="project" value="TreeGrafter"/>
</dbReference>
<dbReference type="GO" id="GO:0042781">
    <property type="term" value="F:3'-tRNA processing endoribonuclease activity"/>
    <property type="evidence" value="ECO:0007669"/>
    <property type="project" value="TreeGrafter"/>
</dbReference>
<dbReference type="GO" id="GO:0004526">
    <property type="term" value="F:ribonuclease P activity"/>
    <property type="evidence" value="ECO:0007669"/>
    <property type="project" value="UniProtKB-UniRule"/>
</dbReference>
<dbReference type="GO" id="GO:0000049">
    <property type="term" value="F:tRNA binding"/>
    <property type="evidence" value="ECO:0007669"/>
    <property type="project" value="UniProtKB-UniRule"/>
</dbReference>
<dbReference type="GO" id="GO:0001682">
    <property type="term" value="P:tRNA 5'-leader removal"/>
    <property type="evidence" value="ECO:0007669"/>
    <property type="project" value="UniProtKB-UniRule"/>
</dbReference>
<dbReference type="FunFam" id="3.30.230.10:FF:000016">
    <property type="entry name" value="Ribonuclease P protein component"/>
    <property type="match status" value="1"/>
</dbReference>
<dbReference type="Gene3D" id="3.30.230.10">
    <property type="match status" value="1"/>
</dbReference>
<dbReference type="HAMAP" id="MF_00227">
    <property type="entry name" value="RNase_P"/>
    <property type="match status" value="1"/>
</dbReference>
<dbReference type="InterPro" id="IPR020568">
    <property type="entry name" value="Ribosomal_Su5_D2-typ_SF"/>
</dbReference>
<dbReference type="InterPro" id="IPR014721">
    <property type="entry name" value="Ribsml_uS5_D2-typ_fold_subgr"/>
</dbReference>
<dbReference type="InterPro" id="IPR000100">
    <property type="entry name" value="RNase_P"/>
</dbReference>
<dbReference type="InterPro" id="IPR020539">
    <property type="entry name" value="RNase_P_CS"/>
</dbReference>
<dbReference type="NCBIfam" id="TIGR00188">
    <property type="entry name" value="rnpA"/>
    <property type="match status" value="1"/>
</dbReference>
<dbReference type="PANTHER" id="PTHR33992">
    <property type="entry name" value="RIBONUCLEASE P PROTEIN COMPONENT"/>
    <property type="match status" value="1"/>
</dbReference>
<dbReference type="PANTHER" id="PTHR33992:SF1">
    <property type="entry name" value="RIBONUCLEASE P PROTEIN COMPONENT"/>
    <property type="match status" value="1"/>
</dbReference>
<dbReference type="Pfam" id="PF00825">
    <property type="entry name" value="Ribonuclease_P"/>
    <property type="match status" value="1"/>
</dbReference>
<dbReference type="SUPFAM" id="SSF54211">
    <property type="entry name" value="Ribosomal protein S5 domain 2-like"/>
    <property type="match status" value="1"/>
</dbReference>
<dbReference type="PROSITE" id="PS00648">
    <property type="entry name" value="RIBONUCLEASE_P"/>
    <property type="match status" value="1"/>
</dbReference>
<reference key="1">
    <citation type="journal article" date="2008" name="J. Bacteriol.">
        <title>The pangenome structure of Escherichia coli: comparative genomic analysis of E. coli commensal and pathogenic isolates.</title>
        <authorList>
            <person name="Rasko D.A."/>
            <person name="Rosovitz M.J."/>
            <person name="Myers G.S.A."/>
            <person name="Mongodin E.F."/>
            <person name="Fricke W.F."/>
            <person name="Gajer P."/>
            <person name="Crabtree J."/>
            <person name="Sebaihia M."/>
            <person name="Thomson N.R."/>
            <person name="Chaudhuri R."/>
            <person name="Henderson I.R."/>
            <person name="Sperandio V."/>
            <person name="Ravel J."/>
        </authorList>
    </citation>
    <scope>NUCLEOTIDE SEQUENCE [LARGE SCALE GENOMIC DNA]</scope>
    <source>
        <strain>HS</strain>
    </source>
</reference>
<keyword id="KW-0255">Endonuclease</keyword>
<keyword id="KW-0378">Hydrolase</keyword>
<keyword id="KW-0540">Nuclease</keyword>
<keyword id="KW-0694">RNA-binding</keyword>
<keyword id="KW-0819">tRNA processing</keyword>
<accession>A8A6G5</accession>
<protein>
    <recommendedName>
        <fullName evidence="1">Ribonuclease P protein component</fullName>
        <shortName evidence="1">RNase P protein</shortName>
        <shortName evidence="1">RNaseP protein</shortName>
        <ecNumber evidence="1">3.1.26.5</ecNumber>
    </recommendedName>
    <alternativeName>
        <fullName evidence="1">Protein C5</fullName>
    </alternativeName>
</protein>
<feature type="chain" id="PRO_1000058751" description="Ribonuclease P protein component">
    <location>
        <begin position="1"/>
        <end position="119"/>
    </location>
</feature>
<gene>
    <name evidence="1" type="primary">rnpA</name>
    <name type="ordered locus">EcHS_A3917</name>
</gene>
<name>RNPA_ECOHS</name>
<sequence>MVKLAFPRELRLLTPSQFTFVFQQPQRAGTPQITILGRLNSLGHPRIGLTVAKKNVRRAHERNRIKRLTRESFRLRQHELPAMDFVVVAKKGVADLDNRALSEALEKLWRRHCRLARGS</sequence>
<comment type="function">
    <text evidence="1">RNaseP catalyzes the removal of the 5'-leader sequence from pre-tRNA to produce the mature 5'-terminus. It can also cleave other RNA substrates such as 4.5S RNA. The protein component plays an auxiliary but essential role in vivo by binding to the 5'-leader sequence and broadening the substrate specificity of the ribozyme.</text>
</comment>
<comment type="catalytic activity">
    <reaction evidence="1">
        <text>Endonucleolytic cleavage of RNA, removing 5'-extranucleotides from tRNA precursor.</text>
        <dbReference type="EC" id="3.1.26.5"/>
    </reaction>
</comment>
<comment type="subunit">
    <text evidence="1">Consists of a catalytic RNA component (M1 or rnpB) and a protein subunit.</text>
</comment>
<comment type="similarity">
    <text evidence="1">Belongs to the RnpA family.</text>
</comment>